<dbReference type="EC" id="3.5.1.-"/>
<dbReference type="EMBL" id="AF015825">
    <property type="protein sequence ID" value="AAC46306.1"/>
    <property type="molecule type" value="Genomic_DNA"/>
</dbReference>
<dbReference type="EMBL" id="AL009126">
    <property type="protein sequence ID" value="CAB13067.1"/>
    <property type="molecule type" value="Genomic_DNA"/>
</dbReference>
<dbReference type="PIR" id="G69849">
    <property type="entry name" value="G69849"/>
</dbReference>
<dbReference type="RefSeq" id="NP_389092.1">
    <property type="nucleotide sequence ID" value="NC_000964.3"/>
</dbReference>
<dbReference type="RefSeq" id="WP_003245023.1">
    <property type="nucleotide sequence ID" value="NZ_OZ025638.1"/>
</dbReference>
<dbReference type="PDB" id="6H8L">
    <property type="method" value="X-ray"/>
    <property type="resolution" value="1.54 A"/>
    <property type="chains" value="A/B=270-467"/>
</dbReference>
<dbReference type="PDB" id="6H8N">
    <property type="method" value="X-ray"/>
    <property type="resolution" value="1.26 A"/>
    <property type="chains" value="A/B=270-467"/>
</dbReference>
<dbReference type="PDBsum" id="6H8L"/>
<dbReference type="PDBsum" id="6H8N"/>
<dbReference type="SMR" id="O34798"/>
<dbReference type="FunCoup" id="O34798">
    <property type="interactions" value="18"/>
</dbReference>
<dbReference type="IntAct" id="O34798">
    <property type="interactions" value="2"/>
</dbReference>
<dbReference type="STRING" id="224308.BSU12100"/>
<dbReference type="PaxDb" id="224308-BSU12100"/>
<dbReference type="EnsemblBacteria" id="CAB13067">
    <property type="protein sequence ID" value="CAB13067"/>
    <property type="gene ID" value="BSU_12100"/>
</dbReference>
<dbReference type="GeneID" id="936440"/>
<dbReference type="KEGG" id="bsu:BSU12100"/>
<dbReference type="PATRIC" id="fig|224308.179.peg.1307"/>
<dbReference type="eggNOG" id="COG0726">
    <property type="taxonomic scope" value="Bacteria"/>
</dbReference>
<dbReference type="InParanoid" id="O34798"/>
<dbReference type="OrthoDB" id="9812065at2"/>
<dbReference type="BioCyc" id="BSUB:BSU12100-MONOMER"/>
<dbReference type="Proteomes" id="UP000001570">
    <property type="component" value="Chromosome"/>
</dbReference>
<dbReference type="GO" id="GO:0005886">
    <property type="term" value="C:plasma membrane"/>
    <property type="evidence" value="ECO:0007669"/>
    <property type="project" value="UniProtKB-SubCell"/>
</dbReference>
<dbReference type="GO" id="GO:0016810">
    <property type="term" value="F:hydrolase activity, acting on carbon-nitrogen (but not peptide) bonds"/>
    <property type="evidence" value="ECO:0007669"/>
    <property type="project" value="InterPro"/>
</dbReference>
<dbReference type="GO" id="GO:0046872">
    <property type="term" value="F:metal ion binding"/>
    <property type="evidence" value="ECO:0007669"/>
    <property type="project" value="UniProtKB-KW"/>
</dbReference>
<dbReference type="GO" id="GO:0005975">
    <property type="term" value="P:carbohydrate metabolic process"/>
    <property type="evidence" value="ECO:0007669"/>
    <property type="project" value="InterPro"/>
</dbReference>
<dbReference type="CDD" id="cd10947">
    <property type="entry name" value="CE4_SpPgdA_BsYjeA_like"/>
    <property type="match status" value="1"/>
</dbReference>
<dbReference type="Gene3D" id="3.30.565.40">
    <property type="entry name" value="Fervidobacterium nodosum Rt17-B1 like"/>
    <property type="match status" value="1"/>
</dbReference>
<dbReference type="Gene3D" id="3.20.20.370">
    <property type="entry name" value="Glycoside hydrolase/deacetylase"/>
    <property type="match status" value="1"/>
</dbReference>
<dbReference type="Gene3D" id="3.90.640.20">
    <property type="entry name" value="Heat-shock cognate protein, ATPase"/>
    <property type="match status" value="1"/>
</dbReference>
<dbReference type="InterPro" id="IPR021729">
    <property type="entry name" value="DUF3298"/>
</dbReference>
<dbReference type="InterPro" id="IPR011330">
    <property type="entry name" value="Glyco_hydro/deAcase_b/a-brl"/>
</dbReference>
<dbReference type="InterPro" id="IPR002509">
    <property type="entry name" value="NODB_dom"/>
</dbReference>
<dbReference type="InterPro" id="IPR025303">
    <property type="entry name" value="PdaC"/>
</dbReference>
<dbReference type="InterPro" id="IPR037126">
    <property type="entry name" value="PdaC/RsiV-like_sf"/>
</dbReference>
<dbReference type="InterPro" id="IPR017219">
    <property type="entry name" value="Peptidoglycan_deacetylase"/>
</dbReference>
<dbReference type="InterPro" id="IPR050248">
    <property type="entry name" value="Polysacc_deacetylase_ArnD"/>
</dbReference>
<dbReference type="PANTHER" id="PTHR10587:SF133">
    <property type="entry name" value="CHITIN DEACETYLASE 1-RELATED"/>
    <property type="match status" value="1"/>
</dbReference>
<dbReference type="PANTHER" id="PTHR10587">
    <property type="entry name" value="GLYCOSYL TRANSFERASE-RELATED"/>
    <property type="match status" value="1"/>
</dbReference>
<dbReference type="Pfam" id="PF11738">
    <property type="entry name" value="DUF3298"/>
    <property type="match status" value="1"/>
</dbReference>
<dbReference type="Pfam" id="PF13739">
    <property type="entry name" value="PdaC"/>
    <property type="match status" value="1"/>
</dbReference>
<dbReference type="Pfam" id="PF01522">
    <property type="entry name" value="Polysacc_deac_1"/>
    <property type="match status" value="1"/>
</dbReference>
<dbReference type="PIRSF" id="PIRSF037479">
    <property type="entry name" value="PG_GlcNAc_deacetylase"/>
    <property type="match status" value="1"/>
</dbReference>
<dbReference type="SUPFAM" id="SSF88713">
    <property type="entry name" value="Glycoside hydrolase/deacetylase"/>
    <property type="match status" value="1"/>
</dbReference>
<dbReference type="PROSITE" id="PS51677">
    <property type="entry name" value="NODB"/>
    <property type="match status" value="1"/>
</dbReference>
<sequence>MLAKRIKWFHVLIAVVCVVGLIGFFHNHSLKKETVMNKVRTDSQYGNVEIATLVNDGKTFNYAVNYPVFKNEKMDSALKRFAEKEVRQFQKETKDVDQEHTTKRNELNVDYKIVHYAKQTVAIVFNEYKYIGGAHGQTVKKTFNYDFSKQAFLSIDDIFKEDADYLHKLSLIAYHELKKNKDIAADDALLKEGTAPKKENFSRFAIKEDYIELYFDTYQVAAGYLGEQSIAIKKSLLKDILKEQYIDKAKNKNKIKEQKPKHEVISLPKEETVDPNQKVIALTFDDGPNPATTNQILDSLKKYKGHATFFVLGSRVQYYPETLIRMLKEGNEVGNHSWSHPLLTRLSVKEALKQINDTQDIIEKISGYRPTLVRPPYGGINDELRSQMKMDVALWDVDPEDWKDRNKKTIVDRVMNQAGDGRTILIHDIYRTSADAADEIIKKLTDQGYQLVTVSQLEEVKKQREAK</sequence>
<accession>O34798</accession>
<reference key="1">
    <citation type="journal article" date="1998" name="Microbiology">
        <title>A 35.7 kb DNA fragment from the Bacillus subtilis chromosome containing a putative 12.3 kb operon involved in hexuronate catabolism and a perfectly symmetrical hypothetical catabolite-responsive element.</title>
        <authorList>
            <person name="Rivolta C."/>
            <person name="Soldo B."/>
            <person name="Lazarevic V."/>
            <person name="Joris B."/>
            <person name="Mauel C."/>
            <person name="Karamata D."/>
        </authorList>
    </citation>
    <scope>NUCLEOTIDE SEQUENCE [GENOMIC DNA]</scope>
    <source>
        <strain>168</strain>
    </source>
</reference>
<reference key="2">
    <citation type="journal article" date="1997" name="Nature">
        <title>The complete genome sequence of the Gram-positive bacterium Bacillus subtilis.</title>
        <authorList>
            <person name="Kunst F."/>
            <person name="Ogasawara N."/>
            <person name="Moszer I."/>
            <person name="Albertini A.M."/>
            <person name="Alloni G."/>
            <person name="Azevedo V."/>
            <person name="Bertero M.G."/>
            <person name="Bessieres P."/>
            <person name="Bolotin A."/>
            <person name="Borchert S."/>
            <person name="Borriss R."/>
            <person name="Boursier L."/>
            <person name="Brans A."/>
            <person name="Braun M."/>
            <person name="Brignell S.C."/>
            <person name="Bron S."/>
            <person name="Brouillet S."/>
            <person name="Bruschi C.V."/>
            <person name="Caldwell B."/>
            <person name="Capuano V."/>
            <person name="Carter N.M."/>
            <person name="Choi S.-K."/>
            <person name="Codani J.-J."/>
            <person name="Connerton I.F."/>
            <person name="Cummings N.J."/>
            <person name="Daniel R.A."/>
            <person name="Denizot F."/>
            <person name="Devine K.M."/>
            <person name="Duesterhoeft A."/>
            <person name="Ehrlich S.D."/>
            <person name="Emmerson P.T."/>
            <person name="Entian K.-D."/>
            <person name="Errington J."/>
            <person name="Fabret C."/>
            <person name="Ferrari E."/>
            <person name="Foulger D."/>
            <person name="Fritz C."/>
            <person name="Fujita M."/>
            <person name="Fujita Y."/>
            <person name="Fuma S."/>
            <person name="Galizzi A."/>
            <person name="Galleron N."/>
            <person name="Ghim S.-Y."/>
            <person name="Glaser P."/>
            <person name="Goffeau A."/>
            <person name="Golightly E.J."/>
            <person name="Grandi G."/>
            <person name="Guiseppi G."/>
            <person name="Guy B.J."/>
            <person name="Haga K."/>
            <person name="Haiech J."/>
            <person name="Harwood C.R."/>
            <person name="Henaut A."/>
            <person name="Hilbert H."/>
            <person name="Holsappel S."/>
            <person name="Hosono S."/>
            <person name="Hullo M.-F."/>
            <person name="Itaya M."/>
            <person name="Jones L.-M."/>
            <person name="Joris B."/>
            <person name="Karamata D."/>
            <person name="Kasahara Y."/>
            <person name="Klaerr-Blanchard M."/>
            <person name="Klein C."/>
            <person name="Kobayashi Y."/>
            <person name="Koetter P."/>
            <person name="Koningstein G."/>
            <person name="Krogh S."/>
            <person name="Kumano M."/>
            <person name="Kurita K."/>
            <person name="Lapidus A."/>
            <person name="Lardinois S."/>
            <person name="Lauber J."/>
            <person name="Lazarevic V."/>
            <person name="Lee S.-M."/>
            <person name="Levine A."/>
            <person name="Liu H."/>
            <person name="Masuda S."/>
            <person name="Mauel C."/>
            <person name="Medigue C."/>
            <person name="Medina N."/>
            <person name="Mellado R.P."/>
            <person name="Mizuno M."/>
            <person name="Moestl D."/>
            <person name="Nakai S."/>
            <person name="Noback M."/>
            <person name="Noone D."/>
            <person name="O'Reilly M."/>
            <person name="Ogawa K."/>
            <person name="Ogiwara A."/>
            <person name="Oudega B."/>
            <person name="Park S.-H."/>
            <person name="Parro V."/>
            <person name="Pohl T.M."/>
            <person name="Portetelle D."/>
            <person name="Porwollik S."/>
            <person name="Prescott A.M."/>
            <person name="Presecan E."/>
            <person name="Pujic P."/>
            <person name="Purnelle B."/>
            <person name="Rapoport G."/>
            <person name="Rey M."/>
            <person name="Reynolds S."/>
            <person name="Rieger M."/>
            <person name="Rivolta C."/>
            <person name="Rocha E."/>
            <person name="Roche B."/>
            <person name="Rose M."/>
            <person name="Sadaie Y."/>
            <person name="Sato T."/>
            <person name="Scanlan E."/>
            <person name="Schleich S."/>
            <person name="Schroeter R."/>
            <person name="Scoffone F."/>
            <person name="Sekiguchi J."/>
            <person name="Sekowska A."/>
            <person name="Seror S.J."/>
            <person name="Serror P."/>
            <person name="Shin B.-S."/>
            <person name="Soldo B."/>
            <person name="Sorokin A."/>
            <person name="Tacconi E."/>
            <person name="Takagi T."/>
            <person name="Takahashi H."/>
            <person name="Takemaru K."/>
            <person name="Takeuchi M."/>
            <person name="Tamakoshi A."/>
            <person name="Tanaka T."/>
            <person name="Terpstra P."/>
            <person name="Tognoni A."/>
            <person name="Tosato V."/>
            <person name="Uchiyama S."/>
            <person name="Vandenbol M."/>
            <person name="Vannier F."/>
            <person name="Vassarotti A."/>
            <person name="Viari A."/>
            <person name="Wambutt R."/>
            <person name="Wedler E."/>
            <person name="Wedler H."/>
            <person name="Weitzenegger T."/>
            <person name="Winters P."/>
            <person name="Wipat A."/>
            <person name="Yamamoto H."/>
            <person name="Yamane K."/>
            <person name="Yasumoto K."/>
            <person name="Yata K."/>
            <person name="Yoshida K."/>
            <person name="Yoshikawa H.-F."/>
            <person name="Zumstein E."/>
            <person name="Yoshikawa H."/>
            <person name="Danchin A."/>
        </authorList>
    </citation>
    <scope>NUCLEOTIDE SEQUENCE [LARGE SCALE GENOMIC DNA]</scope>
    <source>
        <strain>168</strain>
    </source>
</reference>
<reference key="3">
    <citation type="journal article" date="2007" name="J. Biochem.">
        <title>Cloning and characterization of the yjeA gene, encoding a novel deoxyribonuclease, from Bacillus subtilis.</title>
        <authorList>
            <person name="Ng K.L."/>
            <person name="Lam C.C."/>
            <person name="Fu Z."/>
            <person name="Han Y.F."/>
            <person name="Tsim K.W."/>
            <person name="Wong W.K."/>
        </authorList>
    </citation>
    <scope>CAUTION</scope>
</reference>
<reference key="4">
    <citation type="journal article" date="2007" name="Mol. Microbiol.">
        <title>The essential YycFG two-component system controls cell wall metabolism in Bacillus subtilis.</title>
        <authorList>
            <person name="Bisicchia P."/>
            <person name="Noone D."/>
            <person name="Lioliou E."/>
            <person name="Howell A."/>
            <person name="Quigley S."/>
            <person name="Jensen T."/>
            <person name="Jarmer H."/>
            <person name="Devine K.M."/>
        </authorList>
    </citation>
    <scope>REPRESSION BY YYCFG</scope>
</reference>
<reference key="5">
    <citation type="journal article" date="2012" name="J. Biol. Chem.">
        <title>Identification and characterization of a novel polysaccharide deacetylase C (PdaC) from Bacillus subtilis.</title>
        <authorList>
            <person name="Kobayashi K."/>
            <person name="Sudiarta I.P."/>
            <person name="Kodama T."/>
            <person name="Fukushima T."/>
            <person name="Ara K."/>
            <person name="Ozaki K."/>
            <person name="Sekiguchi J."/>
        </authorList>
    </citation>
    <scope>FUNCTION</scope>
    <scope>CATALYTIC ACTIVITY</scope>
    <scope>SUBSTRATE SPECIFICITY</scope>
    <scope>KINETIC PARAMETERS</scope>
    <scope>ACTIVITY REGULATION</scope>
    <scope>GENE NAME</scope>
    <scope>DISRUPTION PHENOTYPE</scope>
    <source>
        <strain>168</strain>
    </source>
</reference>
<keyword id="KW-0002">3D-structure</keyword>
<keyword id="KW-1003">Cell membrane</keyword>
<keyword id="KW-0378">Hydrolase</keyword>
<keyword id="KW-0472">Membrane</keyword>
<keyword id="KW-0479">Metal-binding</keyword>
<keyword id="KW-1185">Reference proteome</keyword>
<keyword id="KW-0812">Transmembrane</keyword>
<keyword id="KW-1133">Transmembrane helix</keyword>
<proteinExistence type="evidence at protein level"/>
<gene>
    <name type="primary">pdaC</name>
    <name type="synonym">yjeA</name>
    <name type="ordered locus">BSU12100</name>
</gene>
<feature type="chain" id="PRO_0000024846" description="Peptidoglycan-N-acetylmuramic acid deacetylase PdaC">
    <location>
        <begin position="1"/>
        <end position="467"/>
    </location>
</feature>
<feature type="transmembrane region" description="Helical" evidence="2">
    <location>
        <begin position="6"/>
        <end position="26"/>
    </location>
</feature>
<feature type="domain" description="NodB homology" evidence="3">
    <location>
        <begin position="278"/>
        <end position="452"/>
    </location>
</feature>
<feature type="active site" description="Proton acceptor" evidence="1">
    <location>
        <position position="285"/>
    </location>
</feature>
<feature type="active site" description="Proton donor" evidence="1">
    <location>
        <position position="427"/>
    </location>
</feature>
<feature type="binding site" evidence="1">
    <location>
        <position position="286"/>
    </location>
    <ligand>
        <name>a divalent metal cation</name>
        <dbReference type="ChEBI" id="CHEBI:60240"/>
    </ligand>
</feature>
<feature type="binding site" evidence="1">
    <location>
        <position position="336"/>
    </location>
    <ligand>
        <name>a divalent metal cation</name>
        <dbReference type="ChEBI" id="CHEBI:60240"/>
    </ligand>
</feature>
<feature type="binding site" evidence="1">
    <location>
        <position position="340"/>
    </location>
    <ligand>
        <name>a divalent metal cation</name>
        <dbReference type="ChEBI" id="CHEBI:60240"/>
    </ligand>
</feature>
<feature type="site" description="Raises pKa of active site His" evidence="1">
    <location>
        <position position="401"/>
    </location>
</feature>
<feature type="strand" evidence="9">
    <location>
        <begin position="279"/>
        <end position="286"/>
    </location>
</feature>
<feature type="helix" evidence="9">
    <location>
        <begin position="290"/>
        <end position="303"/>
    </location>
</feature>
<feature type="strand" evidence="9">
    <location>
        <begin position="308"/>
        <end position="311"/>
    </location>
</feature>
<feature type="helix" evidence="9">
    <location>
        <begin position="313"/>
        <end position="318"/>
    </location>
</feature>
<feature type="helix" evidence="9">
    <location>
        <begin position="320"/>
        <end position="328"/>
    </location>
</feature>
<feature type="strand" evidence="9">
    <location>
        <begin position="332"/>
        <end position="335"/>
    </location>
</feature>
<feature type="helix" evidence="9">
    <location>
        <begin position="343"/>
        <end position="345"/>
    </location>
</feature>
<feature type="helix" evidence="9">
    <location>
        <begin position="348"/>
        <end position="366"/>
    </location>
</feature>
<feature type="helix" evidence="9">
    <location>
        <begin position="376"/>
        <end position="378"/>
    </location>
</feature>
<feature type="helix" evidence="9">
    <location>
        <begin position="382"/>
        <end position="388"/>
    </location>
</feature>
<feature type="strand" evidence="9">
    <location>
        <begin position="390"/>
        <end position="392"/>
    </location>
</feature>
<feature type="turn" evidence="9">
    <location>
        <begin position="401"/>
        <end position="403"/>
    </location>
</feature>
<feature type="helix" evidence="9">
    <location>
        <begin position="407"/>
        <end position="417"/>
    </location>
</feature>
<feature type="strand" evidence="9">
    <location>
        <begin position="423"/>
        <end position="427"/>
    </location>
</feature>
<feature type="helix" evidence="9">
    <location>
        <begin position="431"/>
        <end position="446"/>
    </location>
</feature>
<feature type="helix" evidence="9">
    <location>
        <begin position="454"/>
        <end position="465"/>
    </location>
</feature>
<name>PDAC_BACSU</name>
<organism>
    <name type="scientific">Bacillus subtilis (strain 168)</name>
    <dbReference type="NCBI Taxonomy" id="224308"/>
    <lineage>
        <taxon>Bacteria</taxon>
        <taxon>Bacillati</taxon>
        <taxon>Bacillota</taxon>
        <taxon>Bacilli</taxon>
        <taxon>Bacillales</taxon>
        <taxon>Bacillaceae</taxon>
        <taxon>Bacillus</taxon>
    </lineage>
</organism>
<protein>
    <recommendedName>
        <fullName>Peptidoglycan-N-acetylmuramic acid deacetylase PdaC</fullName>
        <shortName>Peptidoglycan MurNAc deacetylase</shortName>
        <ecNumber>3.5.1.-</ecNumber>
    </recommendedName>
    <alternativeName>
        <fullName>Polysaccharide deacetylase PdaC</fullName>
    </alternativeName>
</protein>
<evidence type="ECO:0000250" key="1"/>
<evidence type="ECO:0000255" key="2"/>
<evidence type="ECO:0000255" key="3">
    <source>
        <dbReference type="PROSITE-ProRule" id="PRU01014"/>
    </source>
</evidence>
<evidence type="ECO:0000269" key="4">
    <source>
    </source>
</evidence>
<evidence type="ECO:0000269" key="5">
    <source>
    </source>
</evidence>
<evidence type="ECO:0000305" key="6"/>
<evidence type="ECO:0000305" key="7">
    <source>
    </source>
</evidence>
<evidence type="ECO:0000305" key="8">
    <source>
    </source>
</evidence>
<evidence type="ECO:0007829" key="9">
    <source>
        <dbReference type="PDB" id="6H8N"/>
    </source>
</evidence>
<comment type="function">
    <text evidence="5">Catalyzes the deacetylation of N-acetylmuramic acid (MurNAc) residues in peptidoglycan, a modification that confers resistance to lysosyme. Is not able to deacetylate N-acetylglucosamine (GlcNAc) residues in peptidoglycan, but can deacylate chitin oligomers such as GlcNAc4 and GlcNAc5. Is essentially not active toward chitosan (partially deacetylated GlcNAc polymer) and has very low activity toward chitin (GlcNAc polymer). Does not deacetylate GlcNAc.</text>
</comment>
<comment type="activity regulation">
    <text evidence="5">Activated by divalent metal cations; Mn(2+) is the most efficient, followed by Ca(2+) and Mg(2+). In contrast to PgdA from S.pneumoniae, these ions are not absolutely required for deacetylase activity.</text>
</comment>
<comment type="biophysicochemical properties">
    <kinetics>
        <KM evidence="5">4.8 mM for non-treated B.subtilis peptidoglycan</KM>
        <KM evidence="5">12.3 mM for GlcNAc4</KM>
        <text>kcat is 0.32 sec(-1) for the deacetylation of MurNAc residues in peptidoglycan, and 0.24 sec(-1) for the deacetylation of GlcNAc4.</text>
    </kinetics>
</comment>
<comment type="subcellular location">
    <subcellularLocation>
        <location evidence="6">Cell membrane</location>
        <topology evidence="6">Single-pass membrane protein</topology>
    </subcellularLocation>
</comment>
<comment type="induction">
    <text evidence="4">Negatively regulated by the two-component system YycFG.</text>
</comment>
<comment type="disruption phenotype">
    <text evidence="5">Cells lacking this gene show sensitivity to lysosyme, in contrast to wild-type.</text>
</comment>
<comment type="miscellaneous">
    <text evidence="8">The product of deacetylated GlcNAc4 by PdaC is GlcNAc-GlcNAc-GlcN-GlcNAc.</text>
</comment>
<comment type="miscellaneous">
    <text>Derepression of pdaC in cells depleted for yycFG leads to increased resistance of the cell walls to lysozyme digestion.</text>
</comment>
<comment type="similarity">
    <text evidence="6">In the N-terminal section; belongs to the RsiV family.</text>
</comment>
<comment type="similarity">
    <text evidence="6">In the C-terminal section; belongs to the polysaccharide deacetylase family.</text>
</comment>
<comment type="caution">
    <text evidence="7 8">Was originally described as a deoxyribonuclease (PubMed:17878218), but it was later shown that PdaC has no DNase activity at all (PubMed:22277649).</text>
</comment>